<organism>
    <name type="scientific">Schizosaccharomyces pombe (strain 972 / ATCC 24843)</name>
    <name type="common">Fission yeast</name>
    <dbReference type="NCBI Taxonomy" id="284812"/>
    <lineage>
        <taxon>Eukaryota</taxon>
        <taxon>Fungi</taxon>
        <taxon>Dikarya</taxon>
        <taxon>Ascomycota</taxon>
        <taxon>Taphrinomycotina</taxon>
        <taxon>Schizosaccharomycetes</taxon>
        <taxon>Schizosaccharomycetales</taxon>
        <taxon>Schizosaccharomycetaceae</taxon>
        <taxon>Schizosaccharomyces</taxon>
    </lineage>
</organism>
<name>NSRP1_SCHPO</name>
<protein>
    <recommendedName>
        <fullName>Nuclear speckle splicing regulatory protein 1 homolog</fullName>
    </recommendedName>
    <alternativeName>
        <fullName>Coiled-coil domain-containing protein 55 homolog</fullName>
    </alternativeName>
</protein>
<sequence>MSGTGFRYGLNVMKKKKPNESSNRITFTEDDSSSSEQEHAPIPNSFSSQITAASDASKDDNYDASIYGFDEFYDSMKSAEREQMELKRLESKDRRPKYMENLIESAKKRKRDLLLARERALLKKNELEGDDATEKFVTSSYKKHREEVQKAIEDRKEEDEKSITDTTTGMKDFYASMLDRQEKIHQAAVEGVQNSKKTGAEIGDAMKGQDTLGSDNLILEAKKKGLKLELNDNNEIVDQRQILTAGLNIRKSSANNSMRDDKKRNHKSSYKRSLSPSTRYHQDRPDKRHGTYSLEEIDKQRKEFENRQRLQKEKEFQKSREAALKIHASRNTTETQVQSARERYLQRKKKAATNP</sequence>
<proteinExistence type="inferred from homology"/>
<comment type="similarity">
    <text evidence="3">Belongs to the NSRP1 family.</text>
</comment>
<reference key="1">
    <citation type="journal article" date="2002" name="Nature">
        <title>The genome sequence of Schizosaccharomyces pombe.</title>
        <authorList>
            <person name="Wood V."/>
            <person name="Gwilliam R."/>
            <person name="Rajandream M.A."/>
            <person name="Lyne M.H."/>
            <person name="Lyne R."/>
            <person name="Stewart A."/>
            <person name="Sgouros J.G."/>
            <person name="Peat N."/>
            <person name="Hayles J."/>
            <person name="Baker S.G."/>
            <person name="Basham D."/>
            <person name="Bowman S."/>
            <person name="Brooks K."/>
            <person name="Brown D."/>
            <person name="Brown S."/>
            <person name="Chillingworth T."/>
            <person name="Churcher C.M."/>
            <person name="Collins M."/>
            <person name="Connor R."/>
            <person name="Cronin A."/>
            <person name="Davis P."/>
            <person name="Feltwell T."/>
            <person name="Fraser A."/>
            <person name="Gentles S."/>
            <person name="Goble A."/>
            <person name="Hamlin N."/>
            <person name="Harris D.E."/>
            <person name="Hidalgo J."/>
            <person name="Hodgson G."/>
            <person name="Holroyd S."/>
            <person name="Hornsby T."/>
            <person name="Howarth S."/>
            <person name="Huckle E.J."/>
            <person name="Hunt S."/>
            <person name="Jagels K."/>
            <person name="James K.D."/>
            <person name="Jones L."/>
            <person name="Jones M."/>
            <person name="Leather S."/>
            <person name="McDonald S."/>
            <person name="McLean J."/>
            <person name="Mooney P."/>
            <person name="Moule S."/>
            <person name="Mungall K.L."/>
            <person name="Murphy L.D."/>
            <person name="Niblett D."/>
            <person name="Odell C."/>
            <person name="Oliver K."/>
            <person name="O'Neil S."/>
            <person name="Pearson D."/>
            <person name="Quail M.A."/>
            <person name="Rabbinowitsch E."/>
            <person name="Rutherford K.M."/>
            <person name="Rutter S."/>
            <person name="Saunders D."/>
            <person name="Seeger K."/>
            <person name="Sharp S."/>
            <person name="Skelton J."/>
            <person name="Simmonds M.N."/>
            <person name="Squares R."/>
            <person name="Squares S."/>
            <person name="Stevens K."/>
            <person name="Taylor K."/>
            <person name="Taylor R.G."/>
            <person name="Tivey A."/>
            <person name="Walsh S.V."/>
            <person name="Warren T."/>
            <person name="Whitehead S."/>
            <person name="Woodward J.R."/>
            <person name="Volckaert G."/>
            <person name="Aert R."/>
            <person name="Robben J."/>
            <person name="Grymonprez B."/>
            <person name="Weltjens I."/>
            <person name="Vanstreels E."/>
            <person name="Rieger M."/>
            <person name="Schaefer M."/>
            <person name="Mueller-Auer S."/>
            <person name="Gabel C."/>
            <person name="Fuchs M."/>
            <person name="Duesterhoeft A."/>
            <person name="Fritzc C."/>
            <person name="Holzer E."/>
            <person name="Moestl D."/>
            <person name="Hilbert H."/>
            <person name="Borzym K."/>
            <person name="Langer I."/>
            <person name="Beck A."/>
            <person name="Lehrach H."/>
            <person name="Reinhardt R."/>
            <person name="Pohl T.M."/>
            <person name="Eger P."/>
            <person name="Zimmermann W."/>
            <person name="Wedler H."/>
            <person name="Wambutt R."/>
            <person name="Purnelle B."/>
            <person name="Goffeau A."/>
            <person name="Cadieu E."/>
            <person name="Dreano S."/>
            <person name="Gloux S."/>
            <person name="Lelaure V."/>
            <person name="Mottier S."/>
            <person name="Galibert F."/>
            <person name="Aves S.J."/>
            <person name="Xiang Z."/>
            <person name="Hunt C."/>
            <person name="Moore K."/>
            <person name="Hurst S.M."/>
            <person name="Lucas M."/>
            <person name="Rochet M."/>
            <person name="Gaillardin C."/>
            <person name="Tallada V.A."/>
            <person name="Garzon A."/>
            <person name="Thode G."/>
            <person name="Daga R.R."/>
            <person name="Cruzado L."/>
            <person name="Jimenez J."/>
            <person name="Sanchez M."/>
            <person name="del Rey F."/>
            <person name="Benito J."/>
            <person name="Dominguez A."/>
            <person name="Revuelta J.L."/>
            <person name="Moreno S."/>
            <person name="Armstrong J."/>
            <person name="Forsburg S.L."/>
            <person name="Cerutti L."/>
            <person name="Lowe T."/>
            <person name="McCombie W.R."/>
            <person name="Paulsen I."/>
            <person name="Potashkin J."/>
            <person name="Shpakovski G.V."/>
            <person name="Ussery D."/>
            <person name="Barrell B.G."/>
            <person name="Nurse P."/>
        </authorList>
    </citation>
    <scope>NUCLEOTIDE SEQUENCE [LARGE SCALE GENOMIC DNA]</scope>
    <source>
        <strain>972 / ATCC 24843</strain>
    </source>
</reference>
<gene>
    <name type="ORF">SPAC29A4.06c</name>
</gene>
<accession>O14009</accession>
<evidence type="ECO:0000255" key="1"/>
<evidence type="ECO:0000256" key="2">
    <source>
        <dbReference type="SAM" id="MobiDB-lite"/>
    </source>
</evidence>
<evidence type="ECO:0000305" key="3"/>
<keyword id="KW-0175">Coiled coil</keyword>
<keyword id="KW-1185">Reference proteome</keyword>
<dbReference type="EMBL" id="CU329670">
    <property type="protein sequence ID" value="CAB10133.1"/>
    <property type="molecule type" value="Genomic_DNA"/>
</dbReference>
<dbReference type="PIR" id="T38483">
    <property type="entry name" value="T38483"/>
</dbReference>
<dbReference type="RefSeq" id="NP_594876.1">
    <property type="nucleotide sequence ID" value="NM_001020305.2"/>
</dbReference>
<dbReference type="SMR" id="O14009"/>
<dbReference type="BioGRID" id="278644">
    <property type="interactions" value="3"/>
</dbReference>
<dbReference type="FunCoup" id="O14009">
    <property type="interactions" value="35"/>
</dbReference>
<dbReference type="STRING" id="284812.O14009"/>
<dbReference type="iPTMnet" id="O14009"/>
<dbReference type="PaxDb" id="4896-SPAC29A4.06c.1"/>
<dbReference type="EnsemblFungi" id="SPAC29A4.06c.1">
    <property type="protein sequence ID" value="SPAC29A4.06c.1:pep"/>
    <property type="gene ID" value="SPAC29A4.06c"/>
</dbReference>
<dbReference type="KEGG" id="spo:2542169"/>
<dbReference type="PomBase" id="SPAC29A4.06c"/>
<dbReference type="VEuPathDB" id="FungiDB:SPAC29A4.06c"/>
<dbReference type="eggNOG" id="KOG2117">
    <property type="taxonomic scope" value="Eukaryota"/>
</dbReference>
<dbReference type="HOGENOM" id="CLU_042321_0_0_1"/>
<dbReference type="InParanoid" id="O14009"/>
<dbReference type="OMA" id="DEYYDSM"/>
<dbReference type="PhylomeDB" id="O14009"/>
<dbReference type="PRO" id="PR:O14009"/>
<dbReference type="Proteomes" id="UP000002485">
    <property type="component" value="Chromosome I"/>
</dbReference>
<dbReference type="GO" id="GO:0005634">
    <property type="term" value="C:nucleus"/>
    <property type="evidence" value="ECO:0007005"/>
    <property type="project" value="PomBase"/>
</dbReference>
<dbReference type="GO" id="GO:1990904">
    <property type="term" value="C:ribonucleoprotein complex"/>
    <property type="evidence" value="ECO:0000250"/>
    <property type="project" value="PomBase"/>
</dbReference>
<dbReference type="GO" id="GO:0003729">
    <property type="term" value="F:mRNA binding"/>
    <property type="evidence" value="ECO:0000250"/>
    <property type="project" value="PomBase"/>
</dbReference>
<dbReference type="GO" id="GO:0000381">
    <property type="term" value="P:regulation of alternative mRNA splicing, via spliceosome"/>
    <property type="evidence" value="ECO:0007669"/>
    <property type="project" value="InterPro"/>
</dbReference>
<dbReference type="InterPro" id="IPR053246">
    <property type="entry name" value="NS_splicing_regulatory_protein"/>
</dbReference>
<dbReference type="InterPro" id="IPR018612">
    <property type="entry name" value="NSRP1_N"/>
</dbReference>
<dbReference type="PANTHER" id="PTHR47845">
    <property type="entry name" value="NUCLEAR SPECKLE SPLICING REGULATORY PROTEIN 1 HOMOLOG"/>
    <property type="match status" value="1"/>
</dbReference>
<dbReference type="PANTHER" id="PTHR47845:SF1">
    <property type="entry name" value="NUCLEAR SPECKLE SPLICING REGULATORY PROTEIN 1 HOMOLOG"/>
    <property type="match status" value="1"/>
</dbReference>
<dbReference type="Pfam" id="PF09745">
    <property type="entry name" value="NSRP1_N"/>
    <property type="match status" value="1"/>
</dbReference>
<feature type="chain" id="PRO_0000116648" description="Nuclear speckle splicing regulatory protein 1 homolog">
    <location>
        <begin position="1"/>
        <end position="355"/>
    </location>
</feature>
<feature type="region of interest" description="Disordered" evidence="2">
    <location>
        <begin position="1"/>
        <end position="57"/>
    </location>
</feature>
<feature type="region of interest" description="Disordered" evidence="2">
    <location>
        <begin position="253"/>
        <end position="292"/>
    </location>
</feature>
<feature type="region of interest" description="Disordered" evidence="2">
    <location>
        <begin position="325"/>
        <end position="355"/>
    </location>
</feature>
<feature type="coiled-coil region" evidence="1">
    <location>
        <begin position="99"/>
        <end position="162"/>
    </location>
</feature>
<feature type="coiled-coil region" evidence="1">
    <location>
        <begin position="293"/>
        <end position="326"/>
    </location>
</feature>
<feature type="compositionally biased region" description="Polar residues" evidence="2">
    <location>
        <begin position="44"/>
        <end position="54"/>
    </location>
</feature>
<feature type="compositionally biased region" description="Basic and acidic residues" evidence="2">
    <location>
        <begin position="280"/>
        <end position="289"/>
    </location>
</feature>
<feature type="compositionally biased region" description="Polar residues" evidence="2">
    <location>
        <begin position="329"/>
        <end position="339"/>
    </location>
</feature>
<feature type="compositionally biased region" description="Basic residues" evidence="2">
    <location>
        <begin position="346"/>
        <end position="355"/>
    </location>
</feature>